<accession>Q0TML0</accession>
<proteinExistence type="inferred from homology"/>
<feature type="chain" id="PRO_1000025872" description="Protein-arginine kinase">
    <location>
        <begin position="1"/>
        <end position="337"/>
    </location>
</feature>
<feature type="domain" description="Phosphagen kinase C-terminal" evidence="1">
    <location>
        <begin position="12"/>
        <end position="240"/>
    </location>
</feature>
<feature type="binding site" evidence="1">
    <location>
        <begin position="15"/>
        <end position="19"/>
    </location>
    <ligand>
        <name>ATP</name>
        <dbReference type="ChEBI" id="CHEBI:30616"/>
    </ligand>
</feature>
<feature type="binding site" evidence="1">
    <location>
        <begin position="162"/>
        <end position="166"/>
    </location>
    <ligand>
        <name>ATP</name>
        <dbReference type="ChEBI" id="CHEBI:30616"/>
    </ligand>
</feature>
<feature type="binding site" evidence="1">
    <location>
        <begin position="193"/>
        <end position="198"/>
    </location>
    <ligand>
        <name>ATP</name>
        <dbReference type="ChEBI" id="CHEBI:30616"/>
    </ligand>
</feature>
<protein>
    <recommendedName>
        <fullName evidence="1">Protein-arginine kinase</fullName>
        <ecNumber evidence="1">2.7.14.1</ecNumber>
    </recommendedName>
</protein>
<evidence type="ECO:0000255" key="1">
    <source>
        <dbReference type="HAMAP-Rule" id="MF_00602"/>
    </source>
</evidence>
<comment type="function">
    <text evidence="1">Catalyzes the specific phosphorylation of arginine residues in proteins.</text>
</comment>
<comment type="catalytic activity">
    <reaction evidence="1">
        <text>L-arginyl-[protein] + ATP = N(omega)-phospho-L-arginyl-[protein] + ADP + H(+)</text>
        <dbReference type="Rhea" id="RHEA:43384"/>
        <dbReference type="Rhea" id="RHEA-COMP:10532"/>
        <dbReference type="Rhea" id="RHEA-COMP:10533"/>
        <dbReference type="ChEBI" id="CHEBI:15378"/>
        <dbReference type="ChEBI" id="CHEBI:29965"/>
        <dbReference type="ChEBI" id="CHEBI:30616"/>
        <dbReference type="ChEBI" id="CHEBI:83226"/>
        <dbReference type="ChEBI" id="CHEBI:456216"/>
        <dbReference type="EC" id="2.7.14.1"/>
    </reaction>
</comment>
<comment type="similarity">
    <text evidence="1">Belongs to the ATP:guanido phosphotransferase family.</text>
</comment>
<keyword id="KW-0067">ATP-binding</keyword>
<keyword id="KW-0418">Kinase</keyword>
<keyword id="KW-0547">Nucleotide-binding</keyword>
<keyword id="KW-0808">Transferase</keyword>
<gene>
    <name evidence="1" type="primary">mcsB</name>
    <name type="ordered locus">CPF_2752</name>
</gene>
<sequence>MVQWISPLDNSIVIASKVKILRNIKGIKFTKLLNEEEFNDLLSMVLGRLKEIDILDKCYVVKLKDGEEKIIDYYKENFGLIKYFENKDNLIFIMNKNGEFNILLNEEEHIGIECTNSGLSLREVYSKVDNLDDLIEEKIHYSFDSELGYLTSNIKNLGTALRAKVFIHLPLLSSNNLIRIIKNALKEEGITLKSIYNSGNKDVGNIYEVSNIKTLGMSEKDILDSLISITNKLILREKNQRDNLSKDEYIELKDDILRSLGVLRNTYSIDRDEALKYLSYVRLGVELGIIEDLSLKSVNSAMIEIQPDMINNSSIKKRDIQSLKIERAKIIRNALNT</sequence>
<organism>
    <name type="scientific">Clostridium perfringens (strain ATCC 13124 / DSM 756 / JCM 1290 / NCIMB 6125 / NCTC 8237 / Type A)</name>
    <dbReference type="NCBI Taxonomy" id="195103"/>
    <lineage>
        <taxon>Bacteria</taxon>
        <taxon>Bacillati</taxon>
        <taxon>Bacillota</taxon>
        <taxon>Clostridia</taxon>
        <taxon>Eubacteriales</taxon>
        <taxon>Clostridiaceae</taxon>
        <taxon>Clostridium</taxon>
    </lineage>
</organism>
<name>MCSB_CLOP1</name>
<reference key="1">
    <citation type="journal article" date="2006" name="Genome Res.">
        <title>Skewed genomic variability in strains of the toxigenic bacterial pathogen, Clostridium perfringens.</title>
        <authorList>
            <person name="Myers G.S.A."/>
            <person name="Rasko D.A."/>
            <person name="Cheung J.K."/>
            <person name="Ravel J."/>
            <person name="Seshadri R."/>
            <person name="DeBoy R.T."/>
            <person name="Ren Q."/>
            <person name="Varga J."/>
            <person name="Awad M.M."/>
            <person name="Brinkac L.M."/>
            <person name="Daugherty S.C."/>
            <person name="Haft D.H."/>
            <person name="Dodson R.J."/>
            <person name="Madupu R."/>
            <person name="Nelson W.C."/>
            <person name="Rosovitz M.J."/>
            <person name="Sullivan S.A."/>
            <person name="Khouri H."/>
            <person name="Dimitrov G.I."/>
            <person name="Watkins K.L."/>
            <person name="Mulligan S."/>
            <person name="Benton J."/>
            <person name="Radune D."/>
            <person name="Fisher D.J."/>
            <person name="Atkins H.S."/>
            <person name="Hiscox T."/>
            <person name="Jost B.H."/>
            <person name="Billington S.J."/>
            <person name="Songer J.G."/>
            <person name="McClane B.A."/>
            <person name="Titball R.W."/>
            <person name="Rood J.I."/>
            <person name="Melville S.B."/>
            <person name="Paulsen I.T."/>
        </authorList>
    </citation>
    <scope>NUCLEOTIDE SEQUENCE [LARGE SCALE GENOMIC DNA]</scope>
    <source>
        <strain>ATCC 13124 / DSM 756 / JCM 1290 / NCIMB 6125 / NCTC 8237 / S 107 / Type A</strain>
    </source>
</reference>
<dbReference type="EC" id="2.7.14.1" evidence="1"/>
<dbReference type="EMBL" id="CP000246">
    <property type="protein sequence ID" value="ABG83223.1"/>
    <property type="molecule type" value="Genomic_DNA"/>
</dbReference>
<dbReference type="RefSeq" id="WP_003459295.1">
    <property type="nucleotide sequence ID" value="NC_008261.1"/>
</dbReference>
<dbReference type="SMR" id="Q0TML0"/>
<dbReference type="STRING" id="195103.CPF_2752"/>
<dbReference type="PaxDb" id="195103-CPF_2752"/>
<dbReference type="KEGG" id="cpf:CPF_2752"/>
<dbReference type="eggNOG" id="COG3869">
    <property type="taxonomic scope" value="Bacteria"/>
</dbReference>
<dbReference type="HOGENOM" id="CLU_066591_1_0_9"/>
<dbReference type="Proteomes" id="UP000001823">
    <property type="component" value="Chromosome"/>
</dbReference>
<dbReference type="GO" id="GO:0005615">
    <property type="term" value="C:extracellular space"/>
    <property type="evidence" value="ECO:0007669"/>
    <property type="project" value="TreeGrafter"/>
</dbReference>
<dbReference type="GO" id="GO:0005524">
    <property type="term" value="F:ATP binding"/>
    <property type="evidence" value="ECO:0007669"/>
    <property type="project" value="UniProtKB-KW"/>
</dbReference>
<dbReference type="GO" id="GO:0004111">
    <property type="term" value="F:creatine kinase activity"/>
    <property type="evidence" value="ECO:0007669"/>
    <property type="project" value="InterPro"/>
</dbReference>
<dbReference type="GO" id="GO:0004672">
    <property type="term" value="F:protein kinase activity"/>
    <property type="evidence" value="ECO:0007669"/>
    <property type="project" value="UniProtKB-UniRule"/>
</dbReference>
<dbReference type="GO" id="GO:0046314">
    <property type="term" value="P:phosphocreatine biosynthetic process"/>
    <property type="evidence" value="ECO:0007669"/>
    <property type="project" value="InterPro"/>
</dbReference>
<dbReference type="CDD" id="cd07930">
    <property type="entry name" value="bacterial_phosphagen_kinase"/>
    <property type="match status" value="1"/>
</dbReference>
<dbReference type="Gene3D" id="3.30.590.10">
    <property type="entry name" value="Glutamine synthetase/guanido kinase, catalytic domain"/>
    <property type="match status" value="1"/>
</dbReference>
<dbReference type="HAMAP" id="MF_00602">
    <property type="entry name" value="Prot_Arg_kinase"/>
    <property type="match status" value="1"/>
</dbReference>
<dbReference type="InterPro" id="IPR023660">
    <property type="entry name" value="Arg_Kinase"/>
</dbReference>
<dbReference type="InterPro" id="IPR000749">
    <property type="entry name" value="ATP-guanido_PTrfase"/>
</dbReference>
<dbReference type="InterPro" id="IPR022414">
    <property type="entry name" value="ATP-guanido_PTrfase_cat"/>
</dbReference>
<dbReference type="InterPro" id="IPR014746">
    <property type="entry name" value="Gln_synth/guanido_kin_cat_dom"/>
</dbReference>
<dbReference type="NCBIfam" id="NF002191">
    <property type="entry name" value="PRK01059.1-1"/>
    <property type="match status" value="1"/>
</dbReference>
<dbReference type="PANTHER" id="PTHR11547:SF38">
    <property type="entry name" value="ARGININE KINASE 1-RELATED"/>
    <property type="match status" value="1"/>
</dbReference>
<dbReference type="PANTHER" id="PTHR11547">
    <property type="entry name" value="ARGININE OR CREATINE KINASE"/>
    <property type="match status" value="1"/>
</dbReference>
<dbReference type="Pfam" id="PF00217">
    <property type="entry name" value="ATP-gua_Ptrans"/>
    <property type="match status" value="1"/>
</dbReference>
<dbReference type="SUPFAM" id="SSF55931">
    <property type="entry name" value="Glutamine synthetase/guanido kinase"/>
    <property type="match status" value="1"/>
</dbReference>
<dbReference type="PROSITE" id="PS51510">
    <property type="entry name" value="PHOSPHAGEN_KINASE_C"/>
    <property type="match status" value="1"/>
</dbReference>